<feature type="initiator methionine" description="Removed" evidence="1">
    <location>
        <position position="1"/>
    </location>
</feature>
<feature type="chain" id="PRO_1000118904" description="Formamidopyrimidine-DNA glycosylase">
    <location>
        <begin position="2"/>
        <end position="271"/>
    </location>
</feature>
<feature type="zinc finger region" description="FPG-type" evidence="2">
    <location>
        <begin position="237"/>
        <end position="271"/>
    </location>
</feature>
<feature type="active site" description="Schiff-base intermediate with DNA" evidence="2">
    <location>
        <position position="2"/>
    </location>
</feature>
<feature type="active site" description="Proton donor" evidence="2">
    <location>
        <position position="3"/>
    </location>
</feature>
<feature type="active site" description="Proton donor; for beta-elimination activity" evidence="2">
    <location>
        <position position="58"/>
    </location>
</feature>
<feature type="active site" description="Proton donor; for delta-elimination activity" evidence="2">
    <location>
        <position position="261"/>
    </location>
</feature>
<feature type="binding site" evidence="2">
    <location>
        <position position="91"/>
    </location>
    <ligand>
        <name>DNA</name>
        <dbReference type="ChEBI" id="CHEBI:16991"/>
    </ligand>
</feature>
<feature type="binding site" evidence="2">
    <location>
        <position position="110"/>
    </location>
    <ligand>
        <name>DNA</name>
        <dbReference type="ChEBI" id="CHEBI:16991"/>
    </ligand>
</feature>
<feature type="binding site" evidence="2">
    <location>
        <position position="152"/>
    </location>
    <ligand>
        <name>DNA</name>
        <dbReference type="ChEBI" id="CHEBI:16991"/>
    </ligand>
</feature>
<gene>
    <name evidence="2" type="primary">mutM</name>
    <name evidence="2" type="synonym">fpg</name>
    <name type="ordered locus">Tgr7_0319</name>
</gene>
<accession>B8GUQ6</accession>
<keyword id="KW-0227">DNA damage</keyword>
<keyword id="KW-0234">DNA repair</keyword>
<keyword id="KW-0238">DNA-binding</keyword>
<keyword id="KW-0326">Glycosidase</keyword>
<keyword id="KW-0378">Hydrolase</keyword>
<keyword id="KW-0456">Lyase</keyword>
<keyword id="KW-0479">Metal-binding</keyword>
<keyword id="KW-0511">Multifunctional enzyme</keyword>
<keyword id="KW-1185">Reference proteome</keyword>
<keyword id="KW-0862">Zinc</keyword>
<keyword id="KW-0863">Zinc-finger</keyword>
<reference key="1">
    <citation type="journal article" date="2011" name="Stand. Genomic Sci.">
        <title>Complete genome sequence of 'Thioalkalivibrio sulfidophilus' HL-EbGr7.</title>
        <authorList>
            <person name="Muyzer G."/>
            <person name="Sorokin D.Y."/>
            <person name="Mavromatis K."/>
            <person name="Lapidus A."/>
            <person name="Clum A."/>
            <person name="Ivanova N."/>
            <person name="Pati A."/>
            <person name="d'Haeseleer P."/>
            <person name="Woyke T."/>
            <person name="Kyrpides N.C."/>
        </authorList>
    </citation>
    <scope>NUCLEOTIDE SEQUENCE [LARGE SCALE GENOMIC DNA]</scope>
    <source>
        <strain>HL-EbGR7</strain>
    </source>
</reference>
<dbReference type="EC" id="3.2.2.23" evidence="2"/>
<dbReference type="EC" id="4.2.99.18" evidence="2"/>
<dbReference type="EMBL" id="CP001339">
    <property type="protein sequence ID" value="ACL71417.1"/>
    <property type="molecule type" value="Genomic_DNA"/>
</dbReference>
<dbReference type="RefSeq" id="WP_012636906.1">
    <property type="nucleotide sequence ID" value="NC_011901.1"/>
</dbReference>
<dbReference type="SMR" id="B8GUQ6"/>
<dbReference type="STRING" id="396588.Tgr7_0319"/>
<dbReference type="KEGG" id="tgr:Tgr7_0319"/>
<dbReference type="eggNOG" id="COG0266">
    <property type="taxonomic scope" value="Bacteria"/>
</dbReference>
<dbReference type="HOGENOM" id="CLU_038423_1_1_6"/>
<dbReference type="OrthoDB" id="9800855at2"/>
<dbReference type="Proteomes" id="UP000002383">
    <property type="component" value="Chromosome"/>
</dbReference>
<dbReference type="GO" id="GO:0034039">
    <property type="term" value="F:8-oxo-7,8-dihydroguanine DNA N-glycosylase activity"/>
    <property type="evidence" value="ECO:0007669"/>
    <property type="project" value="TreeGrafter"/>
</dbReference>
<dbReference type="GO" id="GO:0140078">
    <property type="term" value="F:class I DNA-(apurinic or apyrimidinic site) endonuclease activity"/>
    <property type="evidence" value="ECO:0007669"/>
    <property type="project" value="UniProtKB-EC"/>
</dbReference>
<dbReference type="GO" id="GO:0003684">
    <property type="term" value="F:damaged DNA binding"/>
    <property type="evidence" value="ECO:0007669"/>
    <property type="project" value="InterPro"/>
</dbReference>
<dbReference type="GO" id="GO:0008270">
    <property type="term" value="F:zinc ion binding"/>
    <property type="evidence" value="ECO:0007669"/>
    <property type="project" value="UniProtKB-UniRule"/>
</dbReference>
<dbReference type="GO" id="GO:0006284">
    <property type="term" value="P:base-excision repair"/>
    <property type="evidence" value="ECO:0007669"/>
    <property type="project" value="InterPro"/>
</dbReference>
<dbReference type="CDD" id="cd08966">
    <property type="entry name" value="EcFpg-like_N"/>
    <property type="match status" value="1"/>
</dbReference>
<dbReference type="FunFam" id="1.10.8.50:FF:000003">
    <property type="entry name" value="Formamidopyrimidine-DNA glycosylase"/>
    <property type="match status" value="1"/>
</dbReference>
<dbReference type="FunFam" id="3.20.190.10:FF:000001">
    <property type="entry name" value="Formamidopyrimidine-DNA glycosylase"/>
    <property type="match status" value="1"/>
</dbReference>
<dbReference type="Gene3D" id="1.10.8.50">
    <property type="match status" value="1"/>
</dbReference>
<dbReference type="Gene3D" id="3.20.190.10">
    <property type="entry name" value="MutM-like, N-terminal"/>
    <property type="match status" value="1"/>
</dbReference>
<dbReference type="HAMAP" id="MF_00103">
    <property type="entry name" value="Fapy_DNA_glycosyl"/>
    <property type="match status" value="1"/>
</dbReference>
<dbReference type="InterPro" id="IPR015886">
    <property type="entry name" value="DNA_glyclase/AP_lyase_DNA-bd"/>
</dbReference>
<dbReference type="InterPro" id="IPR020629">
    <property type="entry name" value="Formamido-pyr_DNA_Glyclase"/>
</dbReference>
<dbReference type="InterPro" id="IPR012319">
    <property type="entry name" value="FPG_cat"/>
</dbReference>
<dbReference type="InterPro" id="IPR035937">
    <property type="entry name" value="MutM-like_N-ter"/>
</dbReference>
<dbReference type="InterPro" id="IPR010979">
    <property type="entry name" value="Ribosomal_uS13-like_H2TH"/>
</dbReference>
<dbReference type="InterPro" id="IPR000214">
    <property type="entry name" value="Znf_DNA_glyclase/AP_lyase"/>
</dbReference>
<dbReference type="InterPro" id="IPR010663">
    <property type="entry name" value="Znf_FPG/IleRS"/>
</dbReference>
<dbReference type="NCBIfam" id="TIGR00577">
    <property type="entry name" value="fpg"/>
    <property type="match status" value="1"/>
</dbReference>
<dbReference type="NCBIfam" id="NF002211">
    <property type="entry name" value="PRK01103.1"/>
    <property type="match status" value="1"/>
</dbReference>
<dbReference type="PANTHER" id="PTHR22993">
    <property type="entry name" value="FORMAMIDOPYRIMIDINE-DNA GLYCOSYLASE"/>
    <property type="match status" value="1"/>
</dbReference>
<dbReference type="PANTHER" id="PTHR22993:SF9">
    <property type="entry name" value="FORMAMIDOPYRIMIDINE-DNA GLYCOSYLASE"/>
    <property type="match status" value="1"/>
</dbReference>
<dbReference type="Pfam" id="PF01149">
    <property type="entry name" value="Fapy_DNA_glyco"/>
    <property type="match status" value="1"/>
</dbReference>
<dbReference type="Pfam" id="PF06831">
    <property type="entry name" value="H2TH"/>
    <property type="match status" value="1"/>
</dbReference>
<dbReference type="Pfam" id="PF06827">
    <property type="entry name" value="zf-FPG_IleRS"/>
    <property type="match status" value="1"/>
</dbReference>
<dbReference type="SMART" id="SM00898">
    <property type="entry name" value="Fapy_DNA_glyco"/>
    <property type="match status" value="1"/>
</dbReference>
<dbReference type="SMART" id="SM01232">
    <property type="entry name" value="H2TH"/>
    <property type="match status" value="1"/>
</dbReference>
<dbReference type="SUPFAM" id="SSF57716">
    <property type="entry name" value="Glucocorticoid receptor-like (DNA-binding domain)"/>
    <property type="match status" value="1"/>
</dbReference>
<dbReference type="SUPFAM" id="SSF81624">
    <property type="entry name" value="N-terminal domain of MutM-like DNA repair proteins"/>
    <property type="match status" value="1"/>
</dbReference>
<dbReference type="SUPFAM" id="SSF46946">
    <property type="entry name" value="S13-like H2TH domain"/>
    <property type="match status" value="1"/>
</dbReference>
<dbReference type="PROSITE" id="PS51068">
    <property type="entry name" value="FPG_CAT"/>
    <property type="match status" value="1"/>
</dbReference>
<dbReference type="PROSITE" id="PS51066">
    <property type="entry name" value="ZF_FPG_2"/>
    <property type="match status" value="1"/>
</dbReference>
<name>FPG_THISH</name>
<comment type="function">
    <text evidence="2">Involved in base excision repair of DNA damaged by oxidation or by mutagenic agents. Acts as a DNA glycosylase that recognizes and removes damaged bases. Has a preference for oxidized purines, such as 7,8-dihydro-8-oxoguanine (8-oxoG). Has AP (apurinic/apyrimidinic) lyase activity and introduces nicks in the DNA strand. Cleaves the DNA backbone by beta-delta elimination to generate a single-strand break at the site of the removed base with both 3'- and 5'-phosphates.</text>
</comment>
<comment type="catalytic activity">
    <reaction evidence="2">
        <text>Hydrolysis of DNA containing ring-opened 7-methylguanine residues, releasing 2,6-diamino-4-hydroxy-5-(N-methyl)formamidopyrimidine.</text>
        <dbReference type="EC" id="3.2.2.23"/>
    </reaction>
</comment>
<comment type="catalytic activity">
    <reaction evidence="2">
        <text>2'-deoxyribonucleotide-(2'-deoxyribose 5'-phosphate)-2'-deoxyribonucleotide-DNA = a 3'-end 2'-deoxyribonucleotide-(2,3-dehydro-2,3-deoxyribose 5'-phosphate)-DNA + a 5'-end 5'-phospho-2'-deoxyribonucleoside-DNA + H(+)</text>
        <dbReference type="Rhea" id="RHEA:66592"/>
        <dbReference type="Rhea" id="RHEA-COMP:13180"/>
        <dbReference type="Rhea" id="RHEA-COMP:16897"/>
        <dbReference type="Rhea" id="RHEA-COMP:17067"/>
        <dbReference type="ChEBI" id="CHEBI:15378"/>
        <dbReference type="ChEBI" id="CHEBI:136412"/>
        <dbReference type="ChEBI" id="CHEBI:157695"/>
        <dbReference type="ChEBI" id="CHEBI:167181"/>
        <dbReference type="EC" id="4.2.99.18"/>
    </reaction>
</comment>
<comment type="cofactor">
    <cofactor evidence="2">
        <name>Zn(2+)</name>
        <dbReference type="ChEBI" id="CHEBI:29105"/>
    </cofactor>
    <text evidence="2">Binds 1 zinc ion per subunit.</text>
</comment>
<comment type="subunit">
    <text evidence="2">Monomer.</text>
</comment>
<comment type="similarity">
    <text evidence="2">Belongs to the FPG family.</text>
</comment>
<protein>
    <recommendedName>
        <fullName evidence="2">Formamidopyrimidine-DNA glycosylase</fullName>
        <shortName evidence="2">Fapy-DNA glycosylase</shortName>
        <ecNumber evidence="2">3.2.2.23</ecNumber>
    </recommendedName>
    <alternativeName>
        <fullName evidence="2">DNA-(apurinic or apyrimidinic site) lyase MutM</fullName>
        <shortName evidence="2">AP lyase MutM</shortName>
        <ecNumber evidence="2">4.2.99.18</ecNumber>
    </alternativeName>
</protein>
<organism>
    <name type="scientific">Thioalkalivibrio sulfidiphilus (strain HL-EbGR7)</name>
    <dbReference type="NCBI Taxonomy" id="396588"/>
    <lineage>
        <taxon>Bacteria</taxon>
        <taxon>Pseudomonadati</taxon>
        <taxon>Pseudomonadota</taxon>
        <taxon>Gammaproteobacteria</taxon>
        <taxon>Chromatiales</taxon>
        <taxon>Ectothiorhodospiraceae</taxon>
        <taxon>Thioalkalivibrio</taxon>
    </lineage>
</organism>
<proteinExistence type="inferred from homology"/>
<sequence>MPELPEVETTRRGIERHVTGRRVTSVIVREPRLRWPVPGDLAERLTGHTLGRVLRRAKYLLIEVDTGLLLLHLGMSGSLRVVTPDAPLRKHDHIDLCLDSGRCLRLHDPRRFGAVLWIEGPAHAHPLLAELGPEPLGKDFDADYLFRSTRKRRVAIKQHIMNSHVVVGVGNIYASEALFLAGIRPGRAAGRLTRAECARLVETIRQVLGEAIAQGGTTLRDFVREDGSHGYFQQHLRVYGRTGLACMACETPVKQIVQGNRSTYYCPACQR</sequence>
<evidence type="ECO:0000250" key="1"/>
<evidence type="ECO:0000255" key="2">
    <source>
        <dbReference type="HAMAP-Rule" id="MF_00103"/>
    </source>
</evidence>